<proteinExistence type="evidence at protein level"/>
<keyword id="KW-0002">3D-structure</keyword>
<keyword id="KW-0025">Alternative splicing</keyword>
<keyword id="KW-0963">Cytoplasm</keyword>
<keyword id="KW-0225">Disease variant</keyword>
<keyword id="KW-1023">Dystonia</keyword>
<keyword id="KW-0945">Host-virus interaction</keyword>
<keyword id="KW-0908">Parkinsonism</keyword>
<keyword id="KW-0597">Phosphoprotein</keyword>
<keyword id="KW-1267">Proteomics identification</keyword>
<keyword id="KW-1185">Reference proteome</keyword>
<keyword id="KW-0677">Repeat</keyword>
<keyword id="KW-0694">RNA-binding</keyword>
<keyword id="KW-0943">RNA-mediated gene silencing</keyword>
<comment type="function">
    <text evidence="1 4 5 6 7 8 16">Activates EIF2AK2/PKR in the absence of double-stranded RNA (dsRNA), leading to phosphorylation of EIF2S1/EFI2-alpha and inhibition of translation and induction of apoptosis. Required for siRNA production by DICER1 and for subsequent siRNA-mediated post-transcriptional gene silencing. Does not seem to be required for processing of pre-miRNA to miRNA by DICER1. Promotes UBC9-p53/TP53 association and sumoylation and phosphorylation of p53/TP53 at 'Lys-386' at 'Ser-392' respectively and enhances its activity in a EIF2AK2/PKR-dependent manner (By similarity).</text>
</comment>
<comment type="subunit">
    <text evidence="1 5 6 7 8 9 12 14 16">Homodimer. Interacts with EIF2AK2/PKR through its DRBM domains. Interacts with DICER1, AGO2 and TARBP2. Also able to interact with dsRNA. Interacts with UBC9 (By similarity). Forms a complex with UBC9 and p53/TP53 (By similarity). Interacts with DUS2L (via DRBM domain). Interacts with RIGI.</text>
</comment>
<comment type="subunit">
    <text evidence="13 14">(Microbial infection) Interacts with ebolavirus protein VP35; this interaction inhibits the interaction between RIGI and PRKRA. In addition, this interaction disrupts the interaction between VP35 and the viral polymerase L. So the VP35-PRKRA interaction plays a critical role in determining the outcome of ebolavirus infection (PubMed:23870315). The interaction PRKRA-VP35 also prevents PRKRA binding to DICER1 and thus allows the virus to counteract host RNA silencing (PubMed:21228243).</text>
</comment>
<comment type="subunit">
    <text evidence="15">(Microbial infection) Interacts with human herpesvirus 8 protein MTA/ORF57; this interaction inhibits stress granule formation.</text>
</comment>
<comment type="interaction">
    <interactant intactId="EBI-713955">
        <id>O75569</id>
    </interactant>
    <interactant intactId="EBI-12002366">
        <id>P78563-4</id>
        <label>ADARB1</label>
    </interactant>
    <organismsDiffer>false</organismsDiffer>
    <experiments>3</experiments>
</comment>
<comment type="interaction">
    <interactant intactId="EBI-713955">
        <id>O75569</id>
    </interactant>
    <interactant intactId="EBI-528269">
        <id>Q9UKV8</id>
        <label>AGO2</label>
    </interactant>
    <organismsDiffer>false</organismsDiffer>
    <experiments>5</experiments>
</comment>
<comment type="interaction">
    <interactant intactId="EBI-713955">
        <id>O75569</id>
    </interactant>
    <interactant intactId="EBI-1046778">
        <id>Q03701</id>
        <label>CEBPZ</label>
    </interactant>
    <organismsDiffer>false</organismsDiffer>
    <experiments>3</experiments>
</comment>
<comment type="interaction">
    <interactant intactId="EBI-713955">
        <id>O75569</id>
    </interactant>
    <interactant intactId="EBI-395506">
        <id>Q9UPY3</id>
        <label>DICER1</label>
    </interactant>
    <organismsDiffer>false</organismsDiffer>
    <experiments>9</experiments>
</comment>
<comment type="interaction">
    <interactant intactId="EBI-713955">
        <id>O75569</id>
    </interactant>
    <interactant intactId="EBI-2339219">
        <id>Q08426</id>
        <label>EHHADH</label>
    </interactant>
    <organismsDiffer>false</organismsDiffer>
    <experiments>3</experiments>
</comment>
<comment type="interaction">
    <interactant intactId="EBI-713955">
        <id>O75569</id>
    </interactant>
    <interactant intactId="EBI-640775">
        <id>P19525</id>
        <label>EIF2AK2</label>
    </interactant>
    <organismsDiffer>false</organismsDiffer>
    <experiments>6</experiments>
</comment>
<comment type="interaction">
    <interactant intactId="EBI-713955">
        <id>O75569</id>
    </interactant>
    <interactant intactId="EBI-6115771">
        <id>Q9BYX4</id>
        <label>IFIH1</label>
    </interactant>
    <organismsDiffer>false</organismsDiffer>
    <experiments>4</experiments>
</comment>
<comment type="interaction">
    <interactant intactId="EBI-713955">
        <id>O75569</id>
    </interactant>
    <interactant intactId="EBI-739832">
        <id>Q8TBB1</id>
        <label>LNX1</label>
    </interactant>
    <organismsDiffer>false</organismsDiffer>
    <experiments>3</experiments>
</comment>
<comment type="interaction">
    <interactant intactId="EBI-713955">
        <id>O75569</id>
    </interactant>
    <interactant intactId="EBI-713507">
        <id>Q9NX58</id>
        <label>LYAR</label>
    </interactant>
    <organismsDiffer>false</organismsDiffer>
    <experiments>7</experiments>
</comment>
<comment type="interaction">
    <interactant intactId="EBI-713955">
        <id>O75569</id>
    </interactant>
    <interactant intactId="EBI-766011">
        <id>O15226</id>
        <label>NKRF</label>
    </interactant>
    <organismsDiffer>false</organismsDiffer>
    <experiments>6</experiments>
</comment>
<comment type="interaction">
    <interactant intactId="EBI-713955">
        <id>O75569</id>
    </interactant>
    <interactant intactId="EBI-348567">
        <id>O75928-2</id>
        <label>PIAS2</label>
    </interactant>
    <organismsDiffer>false</organismsDiffer>
    <experiments>3</experiments>
</comment>
<comment type="interaction">
    <interactant intactId="EBI-713955">
        <id>O75569</id>
    </interactant>
    <interactant intactId="EBI-713955">
        <id>O75569</id>
        <label>PRKRA</label>
    </interactant>
    <organismsDiffer>false</organismsDiffer>
    <experiments>6</experiments>
</comment>
<comment type="interaction">
    <interactant intactId="EBI-713955">
        <id>O75569</id>
    </interactant>
    <interactant intactId="EBI-995350">
        <id>O95786</id>
        <label>RIGI</label>
    </interactant>
    <organismsDiffer>false</organismsDiffer>
    <experiments>5</experiments>
</comment>
<comment type="interaction">
    <interactant intactId="EBI-713955">
        <id>O75569</id>
    </interactant>
    <interactant intactId="EBI-358174">
        <id>O95793</id>
        <label>STAU1</label>
    </interactant>
    <organismsDiffer>false</organismsDiffer>
    <experiments>5</experiments>
</comment>
<comment type="interaction">
    <interactant intactId="EBI-713955">
        <id>O75569</id>
    </interactant>
    <interactant intactId="EBI-740355">
        <id>Q96SI9</id>
        <label>STRBP</label>
    </interactant>
    <organismsDiffer>false</organismsDiffer>
    <experiments>4</experiments>
</comment>
<comment type="interaction">
    <interactant intactId="EBI-713955">
        <id>O75569</id>
    </interactant>
    <interactant intactId="EBI-978581">
        <id>Q15633</id>
        <label>TARBP2</label>
    </interactant>
    <organismsDiffer>false</organismsDiffer>
    <experiments>15</experiments>
</comment>
<comment type="interaction">
    <interactant intactId="EBI-713955">
        <id>O75569</id>
    </interactant>
    <interactant intactId="EBI-2548480">
        <id>Q9HA38</id>
        <label>ZMAT3</label>
    </interactant>
    <organismsDiffer>false</organismsDiffer>
    <experiments>3</experiments>
</comment>
<comment type="interaction">
    <interactant intactId="EBI-713955">
        <id>O75569</id>
    </interactant>
    <interactant intactId="EBI-11529334">
        <id>Q9H898-2</id>
        <label>ZMAT4</label>
    </interactant>
    <organismsDiffer>false</organismsDiffer>
    <experiments>4</experiments>
</comment>
<comment type="interaction">
    <interactant intactId="EBI-713955">
        <id>O75569</id>
    </interactant>
    <interactant intactId="EBI-25639341">
        <id>P03416</id>
        <label>N</label>
    </interactant>
    <organismsDiffer>true</organismsDiffer>
    <experiments>6</experiments>
</comment>
<comment type="interaction">
    <interactant intactId="EBI-713955">
        <id>O75569</id>
    </interactant>
    <interactant intactId="EBI-25475856">
        <id>P0DTC9</id>
        <label>N</label>
    </interactant>
    <organismsDiffer>true</organismsDiffer>
    <experiments>8</experiments>
</comment>
<comment type="interaction">
    <interactant intactId="EBI-713955">
        <id>O75569</id>
    </interactant>
    <interactant intactId="EBI-7602718">
        <id>P59595</id>
        <label>N</label>
    </interactant>
    <organismsDiffer>true</organismsDiffer>
    <experiments>6</experiments>
</comment>
<comment type="interaction">
    <interactant intactId="EBI-713955">
        <id>O75569</id>
    </interactant>
    <interactant intactId="EBI-2547442">
        <id>P03496</id>
        <label>NS</label>
    </interactant>
    <organismsDiffer>true</organismsDiffer>
    <experiments>3</experiments>
</comment>
<comment type="interaction">
    <interactant intactId="EBI-713955">
        <id>O75569</id>
    </interactant>
    <interactant intactId="EBI-11514477">
        <id>Q67020</id>
        <label>PA</label>
    </interactant>
    <organismsDiffer>true</organismsDiffer>
    <experiments>3</experiments>
</comment>
<comment type="interaction">
    <interactant intactId="EBI-713955">
        <id>O75569</id>
    </interactant>
    <interactant intactId="EBI-6148294">
        <id>Q05127</id>
        <label>VP35</label>
    </interactant>
    <organismsDiffer>true</organismsDiffer>
    <experiments>2</experiments>
</comment>
<comment type="interaction">
    <interactant intactId="EBI-15588172">
        <id>O75569-1</id>
    </interactant>
    <interactant intactId="EBI-640775">
        <id>P19525</id>
        <label>EIF2AK2</label>
    </interactant>
    <organismsDiffer>false</organismsDiffer>
    <experiments>3</experiments>
</comment>
<comment type="subcellular location">
    <subcellularLocation>
        <location>Cytoplasm</location>
        <location>Perinuclear region</location>
    </subcellularLocation>
    <subcellularLocation>
        <location>Cytoplasm</location>
    </subcellularLocation>
</comment>
<comment type="alternative products">
    <event type="alternative splicing"/>
    <isoform>
        <id>O75569-1</id>
        <name>1</name>
        <sequence type="displayed"/>
    </isoform>
    <isoform>
        <id>O75569-2</id>
        <name>2</name>
        <sequence type="described" ref="VSP_017283"/>
    </isoform>
    <isoform>
        <id>O75569-3</id>
        <name>3</name>
        <sequence type="described" ref="VSP_017282"/>
    </isoform>
</comment>
<comment type="domain">
    <text>Self-association may occur via interactions between DRBM domains as follows: DRBM 1/DRBM 1, DRBM 1/DRBM 2, DRBM 2/DRBM 2 or DRBM 3/DRBM3.</text>
</comment>
<comment type="PTM">
    <text evidence="7">Phosphorylated at Ser-246 in unstressed cells and at Ser-287 in stressed cells. Phosphorylation at Ser-246 appears to be a prerequisite for subsequent phosphorylation at Ser-287. Phosphorylation at Ser-246 and Ser-287 are necessary for activation of EIF2AK2/PKR under conditions of stress.</text>
</comment>
<comment type="disease" evidence="10 11">
    <disease id="DI-00420">
        <name>Dystonia 16</name>
        <acronym>DYT16</acronym>
        <description>An early-onset dystonia-parkinsonism disorder. Dystonia is defined by the presence of sustained involuntary muscle contraction, often leading to abnormal postures. DYT16 patients have progressive, generalized dystonia with axial muscle involvement, oro-mandibular (sardonic smile) and laryngeal dystonia and, in some cases, parkinsonian features.</description>
        <dbReference type="MIM" id="612067"/>
    </disease>
    <text>The disease is caused by variants affecting the gene represented in this entry.</text>
</comment>
<comment type="similarity">
    <text evidence="19">Belongs to the PRKRA family.</text>
</comment>
<accession>O75569</accession>
<accession>A8K3I6</accession>
<accession>Q53G24</accession>
<accession>Q6X7T5</accession>
<accession>Q8NDK4</accession>
<reference key="1">
    <citation type="journal article" date="1998" name="EMBO J.">
        <title>PACT, a protein activator of the interferon-induced protein kinase, PKR.</title>
        <authorList>
            <person name="Patel R.C."/>
            <person name="Sen G.C."/>
        </authorList>
    </citation>
    <scope>NUCLEOTIDE SEQUENCE [MRNA] (ISOFORM 1)</scope>
    <scope>FUNCTION</scope>
    <scope>INTERACTION WITH EIF2AK2</scope>
    <source>
        <tissue>Placenta</tissue>
    </source>
</reference>
<reference key="2">
    <citation type="journal article" date="1999" name="J. Biol. Chem.">
        <title>RAX, a cellular activator for double-stranded RNA-dependent protein kinase during stress signaling.</title>
        <authorList>
            <person name="Ito T."/>
            <person name="Yang M."/>
            <person name="May W.S."/>
        </authorList>
    </citation>
    <scope>NUCLEOTIDE SEQUENCE [MRNA] (ISOFORM 1)</scope>
    <scope>FUNCTION</scope>
</reference>
<reference key="3">
    <citation type="submission" date="2003-03" db="EMBL/GenBank/DDBJ databases">
        <title>A new spermatogenesis-related gene.</title>
        <authorList>
            <person name="Hu T.H."/>
            <person name="Miao S.Y."/>
            <person name="Zhang X.D."/>
            <person name="Qiao Y."/>
            <person name="Liang G."/>
            <person name="Wang L.F."/>
        </authorList>
    </citation>
    <scope>NUCLEOTIDE SEQUENCE [LARGE SCALE MRNA] (ISOFORM 3)</scope>
    <source>
        <tissue>Testis</tissue>
    </source>
</reference>
<reference key="4">
    <citation type="journal article" date="2001" name="Genome Res.">
        <title>Towards a catalog of human genes and proteins: sequencing and analysis of 500 novel complete protein coding human cDNAs.</title>
        <authorList>
            <person name="Wiemann S."/>
            <person name="Weil B."/>
            <person name="Wellenreuther R."/>
            <person name="Gassenhuber J."/>
            <person name="Glassl S."/>
            <person name="Ansorge W."/>
            <person name="Boecher M."/>
            <person name="Bloecker H."/>
            <person name="Bauersachs S."/>
            <person name="Blum H."/>
            <person name="Lauber J."/>
            <person name="Duesterhoeft A."/>
            <person name="Beyer A."/>
            <person name="Koehrer K."/>
            <person name="Strack N."/>
            <person name="Mewes H.-W."/>
            <person name="Ottenwaelder B."/>
            <person name="Obermaier B."/>
            <person name="Tampe J."/>
            <person name="Heubner D."/>
            <person name="Wambutt R."/>
            <person name="Korn B."/>
            <person name="Klein M."/>
            <person name="Poustka A."/>
        </authorList>
    </citation>
    <scope>NUCLEOTIDE SEQUENCE [LARGE SCALE MRNA] (ISOFORMS 1 AND 2)</scope>
    <source>
        <tissue>Brain</tissue>
    </source>
</reference>
<reference key="5">
    <citation type="submission" date="2003-05" db="EMBL/GenBank/DDBJ databases">
        <title>Cloning of human full-length CDSs in BD Creator(TM) system donor vector.</title>
        <authorList>
            <person name="Kalnine N."/>
            <person name="Chen X."/>
            <person name="Rolfs A."/>
            <person name="Halleck A."/>
            <person name="Hines L."/>
            <person name="Eisenstein S."/>
            <person name="Koundinya M."/>
            <person name="Raphael J."/>
            <person name="Moreira D."/>
            <person name="Kelley T."/>
            <person name="LaBaer J."/>
            <person name="Lin Y."/>
            <person name="Phelan M."/>
            <person name="Farmer A."/>
        </authorList>
    </citation>
    <scope>NUCLEOTIDE SEQUENCE [LARGE SCALE MRNA] (ISOFORM 1)</scope>
</reference>
<reference key="6">
    <citation type="journal article" date="2004" name="Nat. Genet.">
        <title>Complete sequencing and characterization of 21,243 full-length human cDNAs.</title>
        <authorList>
            <person name="Ota T."/>
            <person name="Suzuki Y."/>
            <person name="Nishikawa T."/>
            <person name="Otsuki T."/>
            <person name="Sugiyama T."/>
            <person name="Irie R."/>
            <person name="Wakamatsu A."/>
            <person name="Hayashi K."/>
            <person name="Sato H."/>
            <person name="Nagai K."/>
            <person name="Kimura K."/>
            <person name="Makita H."/>
            <person name="Sekine M."/>
            <person name="Obayashi M."/>
            <person name="Nishi T."/>
            <person name="Shibahara T."/>
            <person name="Tanaka T."/>
            <person name="Ishii S."/>
            <person name="Yamamoto J."/>
            <person name="Saito K."/>
            <person name="Kawai Y."/>
            <person name="Isono Y."/>
            <person name="Nakamura Y."/>
            <person name="Nagahari K."/>
            <person name="Murakami K."/>
            <person name="Yasuda T."/>
            <person name="Iwayanagi T."/>
            <person name="Wagatsuma M."/>
            <person name="Shiratori A."/>
            <person name="Sudo H."/>
            <person name="Hosoiri T."/>
            <person name="Kaku Y."/>
            <person name="Kodaira H."/>
            <person name="Kondo H."/>
            <person name="Sugawara M."/>
            <person name="Takahashi M."/>
            <person name="Kanda K."/>
            <person name="Yokoi T."/>
            <person name="Furuya T."/>
            <person name="Kikkawa E."/>
            <person name="Omura Y."/>
            <person name="Abe K."/>
            <person name="Kamihara K."/>
            <person name="Katsuta N."/>
            <person name="Sato K."/>
            <person name="Tanikawa M."/>
            <person name="Yamazaki M."/>
            <person name="Ninomiya K."/>
            <person name="Ishibashi T."/>
            <person name="Yamashita H."/>
            <person name="Murakawa K."/>
            <person name="Fujimori K."/>
            <person name="Tanai H."/>
            <person name="Kimata M."/>
            <person name="Watanabe M."/>
            <person name="Hiraoka S."/>
            <person name="Chiba Y."/>
            <person name="Ishida S."/>
            <person name="Ono Y."/>
            <person name="Takiguchi S."/>
            <person name="Watanabe S."/>
            <person name="Yosida M."/>
            <person name="Hotuta T."/>
            <person name="Kusano J."/>
            <person name="Kanehori K."/>
            <person name="Takahashi-Fujii A."/>
            <person name="Hara H."/>
            <person name="Tanase T.-O."/>
            <person name="Nomura Y."/>
            <person name="Togiya S."/>
            <person name="Komai F."/>
            <person name="Hara R."/>
            <person name="Takeuchi K."/>
            <person name="Arita M."/>
            <person name="Imose N."/>
            <person name="Musashino K."/>
            <person name="Yuuki H."/>
            <person name="Oshima A."/>
            <person name="Sasaki N."/>
            <person name="Aotsuka S."/>
            <person name="Yoshikawa Y."/>
            <person name="Matsunawa H."/>
            <person name="Ichihara T."/>
            <person name="Shiohata N."/>
            <person name="Sano S."/>
            <person name="Moriya S."/>
            <person name="Momiyama H."/>
            <person name="Satoh N."/>
            <person name="Takami S."/>
            <person name="Terashima Y."/>
            <person name="Suzuki O."/>
            <person name="Nakagawa S."/>
            <person name="Senoh A."/>
            <person name="Mizoguchi H."/>
            <person name="Goto Y."/>
            <person name="Shimizu F."/>
            <person name="Wakebe H."/>
            <person name="Hishigaki H."/>
            <person name="Watanabe T."/>
            <person name="Sugiyama A."/>
            <person name="Takemoto M."/>
            <person name="Kawakami B."/>
            <person name="Yamazaki M."/>
            <person name="Watanabe K."/>
            <person name="Kumagai A."/>
            <person name="Itakura S."/>
            <person name="Fukuzumi Y."/>
            <person name="Fujimori Y."/>
            <person name="Komiyama M."/>
            <person name="Tashiro H."/>
            <person name="Tanigami A."/>
            <person name="Fujiwara T."/>
            <person name="Ono T."/>
            <person name="Yamada K."/>
            <person name="Fujii Y."/>
            <person name="Ozaki K."/>
            <person name="Hirao M."/>
            <person name="Ohmori Y."/>
            <person name="Kawabata A."/>
            <person name="Hikiji T."/>
            <person name="Kobatake N."/>
            <person name="Inagaki H."/>
            <person name="Ikema Y."/>
            <person name="Okamoto S."/>
            <person name="Okitani R."/>
            <person name="Kawakami T."/>
            <person name="Noguchi S."/>
            <person name="Itoh T."/>
            <person name="Shigeta K."/>
            <person name="Senba T."/>
            <person name="Matsumura K."/>
            <person name="Nakajima Y."/>
            <person name="Mizuno T."/>
            <person name="Morinaga M."/>
            <person name="Sasaki M."/>
            <person name="Togashi T."/>
            <person name="Oyama M."/>
            <person name="Hata H."/>
            <person name="Watanabe M."/>
            <person name="Komatsu T."/>
            <person name="Mizushima-Sugano J."/>
            <person name="Satoh T."/>
            <person name="Shirai Y."/>
            <person name="Takahashi Y."/>
            <person name="Nakagawa K."/>
            <person name="Okumura K."/>
            <person name="Nagase T."/>
            <person name="Nomura N."/>
            <person name="Kikuchi H."/>
            <person name="Masuho Y."/>
            <person name="Yamashita R."/>
            <person name="Nakai K."/>
            <person name="Yada T."/>
            <person name="Nakamura Y."/>
            <person name="Ohara O."/>
            <person name="Isogai T."/>
            <person name="Sugano S."/>
        </authorList>
    </citation>
    <scope>NUCLEOTIDE SEQUENCE [LARGE SCALE MRNA] (ISOFORM 1)</scope>
    <source>
        <tissue>Heart</tissue>
    </source>
</reference>
<reference key="7">
    <citation type="submission" date="2004-06" db="EMBL/GenBank/DDBJ databases">
        <title>Cloning of human full open reading frames in Gateway(TM) system entry vector (pDONR201).</title>
        <authorList>
            <person name="Ebert L."/>
            <person name="Schick M."/>
            <person name="Neubert P."/>
            <person name="Schatten R."/>
            <person name="Henze S."/>
            <person name="Korn B."/>
        </authorList>
    </citation>
    <scope>NUCLEOTIDE SEQUENCE [LARGE SCALE MRNA] (ISOFORM 1)</scope>
</reference>
<reference key="8">
    <citation type="submission" date="2005-04" db="EMBL/GenBank/DDBJ databases">
        <authorList>
            <person name="Suzuki Y."/>
            <person name="Sugano S."/>
            <person name="Totoki Y."/>
            <person name="Toyoda A."/>
            <person name="Takeda T."/>
            <person name="Sakaki Y."/>
            <person name="Tanaka A."/>
            <person name="Yokoyama S."/>
        </authorList>
    </citation>
    <scope>NUCLEOTIDE SEQUENCE [LARGE SCALE MRNA] (ISOFORM 1)</scope>
</reference>
<reference key="9">
    <citation type="journal article" date="2005" name="Nature">
        <title>Generation and annotation of the DNA sequences of human chromosomes 2 and 4.</title>
        <authorList>
            <person name="Hillier L.W."/>
            <person name="Graves T.A."/>
            <person name="Fulton R.S."/>
            <person name="Fulton L.A."/>
            <person name="Pepin K.H."/>
            <person name="Minx P."/>
            <person name="Wagner-McPherson C."/>
            <person name="Layman D."/>
            <person name="Wylie K."/>
            <person name="Sekhon M."/>
            <person name="Becker M.C."/>
            <person name="Fewell G.A."/>
            <person name="Delehaunty K.D."/>
            <person name="Miner T.L."/>
            <person name="Nash W.E."/>
            <person name="Kremitzki C."/>
            <person name="Oddy L."/>
            <person name="Du H."/>
            <person name="Sun H."/>
            <person name="Bradshaw-Cordum H."/>
            <person name="Ali J."/>
            <person name="Carter J."/>
            <person name="Cordes M."/>
            <person name="Harris A."/>
            <person name="Isak A."/>
            <person name="van Brunt A."/>
            <person name="Nguyen C."/>
            <person name="Du F."/>
            <person name="Courtney L."/>
            <person name="Kalicki J."/>
            <person name="Ozersky P."/>
            <person name="Abbott S."/>
            <person name="Armstrong J."/>
            <person name="Belter E.A."/>
            <person name="Caruso L."/>
            <person name="Cedroni M."/>
            <person name="Cotton M."/>
            <person name="Davidson T."/>
            <person name="Desai A."/>
            <person name="Elliott G."/>
            <person name="Erb T."/>
            <person name="Fronick C."/>
            <person name="Gaige T."/>
            <person name="Haakenson W."/>
            <person name="Haglund K."/>
            <person name="Holmes A."/>
            <person name="Harkins R."/>
            <person name="Kim K."/>
            <person name="Kruchowski S.S."/>
            <person name="Strong C.M."/>
            <person name="Grewal N."/>
            <person name="Goyea E."/>
            <person name="Hou S."/>
            <person name="Levy A."/>
            <person name="Martinka S."/>
            <person name="Mead K."/>
            <person name="McLellan M.D."/>
            <person name="Meyer R."/>
            <person name="Randall-Maher J."/>
            <person name="Tomlinson C."/>
            <person name="Dauphin-Kohlberg S."/>
            <person name="Kozlowicz-Reilly A."/>
            <person name="Shah N."/>
            <person name="Swearengen-Shahid S."/>
            <person name="Snider J."/>
            <person name="Strong J.T."/>
            <person name="Thompson J."/>
            <person name="Yoakum M."/>
            <person name="Leonard S."/>
            <person name="Pearman C."/>
            <person name="Trani L."/>
            <person name="Radionenko M."/>
            <person name="Waligorski J.E."/>
            <person name="Wang C."/>
            <person name="Rock S.M."/>
            <person name="Tin-Wollam A.-M."/>
            <person name="Maupin R."/>
            <person name="Latreille P."/>
            <person name="Wendl M.C."/>
            <person name="Yang S.-P."/>
            <person name="Pohl C."/>
            <person name="Wallis J.W."/>
            <person name="Spieth J."/>
            <person name="Bieri T.A."/>
            <person name="Berkowicz N."/>
            <person name="Nelson J.O."/>
            <person name="Osborne J."/>
            <person name="Ding L."/>
            <person name="Meyer R."/>
            <person name="Sabo A."/>
            <person name="Shotland Y."/>
            <person name="Sinha P."/>
            <person name="Wohldmann P.E."/>
            <person name="Cook L.L."/>
            <person name="Hickenbotham M.T."/>
            <person name="Eldred J."/>
            <person name="Williams D."/>
            <person name="Jones T.A."/>
            <person name="She X."/>
            <person name="Ciccarelli F.D."/>
            <person name="Izaurralde E."/>
            <person name="Taylor J."/>
            <person name="Schmutz J."/>
            <person name="Myers R.M."/>
            <person name="Cox D.R."/>
            <person name="Huang X."/>
            <person name="McPherson J.D."/>
            <person name="Mardis E.R."/>
            <person name="Clifton S.W."/>
            <person name="Warren W.C."/>
            <person name="Chinwalla A.T."/>
            <person name="Eddy S.R."/>
            <person name="Marra M.A."/>
            <person name="Ovcharenko I."/>
            <person name="Furey T.S."/>
            <person name="Miller W."/>
            <person name="Eichler E.E."/>
            <person name="Bork P."/>
            <person name="Suyama M."/>
            <person name="Torrents D."/>
            <person name="Waterston R.H."/>
            <person name="Wilson R.K."/>
        </authorList>
    </citation>
    <scope>NUCLEOTIDE SEQUENCE [LARGE SCALE GENOMIC DNA]</scope>
</reference>
<reference key="10">
    <citation type="submission" date="2005-09" db="EMBL/GenBank/DDBJ databases">
        <authorList>
            <person name="Mural R.J."/>
            <person name="Istrail S."/>
            <person name="Sutton G.G."/>
            <person name="Florea L."/>
            <person name="Halpern A.L."/>
            <person name="Mobarry C.M."/>
            <person name="Lippert R."/>
            <person name="Walenz B."/>
            <person name="Shatkay H."/>
            <person name="Dew I."/>
            <person name="Miller J.R."/>
            <person name="Flanigan M.J."/>
            <person name="Edwards N.J."/>
            <person name="Bolanos R."/>
            <person name="Fasulo D."/>
            <person name="Halldorsson B.V."/>
            <person name="Hannenhalli S."/>
            <person name="Turner R."/>
            <person name="Yooseph S."/>
            <person name="Lu F."/>
            <person name="Nusskern D.R."/>
            <person name="Shue B.C."/>
            <person name="Zheng X.H."/>
            <person name="Zhong F."/>
            <person name="Delcher A.L."/>
            <person name="Huson D.H."/>
            <person name="Kravitz S.A."/>
            <person name="Mouchard L."/>
            <person name="Reinert K."/>
            <person name="Remington K.A."/>
            <person name="Clark A.G."/>
            <person name="Waterman M.S."/>
            <person name="Eichler E.E."/>
            <person name="Adams M.D."/>
            <person name="Hunkapiller M.W."/>
            <person name="Myers E.W."/>
            <person name="Venter J.C."/>
        </authorList>
    </citation>
    <scope>NUCLEOTIDE SEQUENCE [LARGE SCALE GENOMIC DNA]</scope>
</reference>
<reference key="11">
    <citation type="journal article" date="2004" name="Genome Res.">
        <title>The status, quality, and expansion of the NIH full-length cDNA project: the Mammalian Gene Collection (MGC).</title>
        <authorList>
            <consortium name="The MGC Project Team"/>
        </authorList>
    </citation>
    <scope>NUCLEOTIDE SEQUENCE [LARGE SCALE MRNA] (ISOFORM 1)</scope>
    <source>
        <tissue>Brain</tissue>
    </source>
</reference>
<reference key="12">
    <citation type="journal article" date="2001" name="Mol. Cell. Biol.">
        <title>Modular structure of PACT: distinct domains for binding and activating PKR.</title>
        <authorList>
            <person name="Peters G.A."/>
            <person name="Hartmann R."/>
            <person name="Qin J."/>
            <person name="Sen G.C."/>
        </authorList>
    </citation>
    <scope>FUNCTION</scope>
    <scope>INTERACTION WITH EIF2AK2</scope>
</reference>
<reference key="13">
    <citation type="journal article" date="2006" name="Cell">
        <title>Global, in vivo, and site-specific phosphorylation dynamics in signaling networks.</title>
        <authorList>
            <person name="Olsen J.V."/>
            <person name="Blagoev B."/>
            <person name="Gnad F."/>
            <person name="Macek B."/>
            <person name="Kumar C."/>
            <person name="Mortensen P."/>
            <person name="Mann M."/>
        </authorList>
    </citation>
    <scope>IDENTIFICATION BY MASS SPECTROMETRY [LARGE SCALE ANALYSIS]</scope>
    <source>
        <tissue>Cervix carcinoma</tissue>
    </source>
</reference>
<reference key="14">
    <citation type="journal article" date="2006" name="EMBO J.">
        <title>The role of PACT in the RNA silencing pathway.</title>
        <authorList>
            <person name="Lee Y."/>
            <person name="Hur I."/>
            <person name="Park S.-Y."/>
            <person name="Kim Y.-K."/>
            <person name="Suh M.R."/>
            <person name="Kim V.N."/>
        </authorList>
    </citation>
    <scope>FUNCTION</scope>
    <scope>INTERACTION WITH DICER1; AGO2 AND TARBP2</scope>
    <scope>SUBCELLULAR LOCATION</scope>
    <scope>MUTAGENESIS OF 298-ALA-ALA-299</scope>
</reference>
<reference key="15">
    <citation type="journal article" date="2006" name="J. Biol. Chem.">
        <title>Phosphorylation of specific serine residues in the PKR activation domain of PACT is essential for its ability to mediate apoptosis.</title>
        <authorList>
            <person name="Peters G.A."/>
            <person name="Li S."/>
            <person name="Sen G.C."/>
        </authorList>
    </citation>
    <scope>FUNCTION</scope>
    <scope>INTERACTION WITH EIF2AK2</scope>
    <scope>SUBCELLULAR LOCATION</scope>
    <scope>PHOSPHORYLATION AT SER-246 AND SER-287</scope>
    <scope>MUTAGENESIS OF SER-18; GLN-243; SER-246; ASP-260; ASP-262; SER-265; GLN-271; SER-279; SER-287; GLY-288 AND CYS-291</scope>
</reference>
<reference key="16">
    <citation type="journal article" date="2007" name="J. Biol. Chem.">
        <title>Human TRBP and PACT directly interact with each other and associate with dicer to facilitate the production of small interfering RNA.</title>
        <authorList>
            <person name="Kok K.H."/>
            <person name="Ng M.-H."/>
            <person name="Ching Y.-P."/>
            <person name="Jin D.-Y."/>
        </authorList>
    </citation>
    <scope>FUNCTION</scope>
    <scope>SELF-ASSOCIATION</scope>
    <scope>INTERACTION WITH DICER1 AND TARBP2</scope>
    <scope>SUBCELLULAR LOCATION</scope>
</reference>
<reference key="17">
    <citation type="journal article" date="2008" name="Nucleic Acids Res.">
        <title>Interaction of human tRNA-dihydrouridine synthase-2 with interferon-induced protein kinase PKR.</title>
        <authorList>
            <person name="Mittelstadt M."/>
            <person name="Frump A."/>
            <person name="Khuu T."/>
            <person name="Fowlkes V."/>
            <person name="Handy I."/>
            <person name="Patel C.V."/>
            <person name="Patel R.C."/>
        </authorList>
    </citation>
    <scope>INTERACTION WITH DUS2L</scope>
</reference>
<reference key="18">
    <citation type="journal article" date="2008" name="Proc. Natl. Acad. Sci. U.S.A.">
        <title>A quantitative atlas of mitotic phosphorylation.</title>
        <authorList>
            <person name="Dephoure N."/>
            <person name="Zhou C."/>
            <person name="Villen J."/>
            <person name="Beausoleil S.A."/>
            <person name="Bakalarski C.E."/>
            <person name="Elledge S.J."/>
            <person name="Gygi S.P."/>
        </authorList>
    </citation>
    <scope>PHOSPHORYLATION [LARGE SCALE ANALYSIS] AT SER-18</scope>
    <scope>IDENTIFICATION BY MASS SPECTROMETRY [LARGE SCALE ANALYSIS]</scope>
    <source>
        <tissue>Cervix carcinoma</tissue>
    </source>
</reference>
<reference key="19">
    <citation type="journal article" date="2008" name="RNA Biol.">
        <title>Interactions between the double-stranded RNA-binding proteins TRBP and PACT define the Medipal domain that mediates protein-protein interactions.</title>
        <authorList>
            <person name="Laraki G."/>
            <person name="Clerzius G."/>
            <person name="Daher A."/>
            <person name="Melendez-Pena C."/>
            <person name="Daniels S."/>
            <person name="Gatignol A."/>
        </authorList>
    </citation>
    <scope>SELF-ASSOCIATION</scope>
    <scope>INTERACTION WITH EIF2AK2 AND TARBP2</scope>
    <scope>SUBCELLULAR LOCATION</scope>
</reference>
<reference key="20">
    <citation type="journal article" date="2010" name="Sci. Signal.">
        <title>Quantitative phosphoproteomics reveals widespread full phosphorylation site occupancy during mitosis.</title>
        <authorList>
            <person name="Olsen J.V."/>
            <person name="Vermeulen M."/>
            <person name="Santamaria A."/>
            <person name="Kumar C."/>
            <person name="Miller M.L."/>
            <person name="Jensen L.J."/>
            <person name="Gnad F."/>
            <person name="Cox J."/>
            <person name="Jensen T.S."/>
            <person name="Nigg E.A."/>
            <person name="Brunak S."/>
            <person name="Mann M."/>
        </authorList>
    </citation>
    <scope>PHOSPHORYLATION [LARGE SCALE ANALYSIS] AT SER-18</scope>
    <scope>IDENTIFICATION BY MASS SPECTROMETRY [LARGE SCALE ANALYSIS]</scope>
    <source>
        <tissue>Cervix carcinoma</tissue>
    </source>
</reference>
<reference key="21">
    <citation type="journal article" date="2011" name="BMC Syst. Biol.">
        <title>Initial characterization of the human central proteome.</title>
        <authorList>
            <person name="Burkard T.R."/>
            <person name="Planyavsky M."/>
            <person name="Kaupe I."/>
            <person name="Breitwieser F.P."/>
            <person name="Buerckstuemmer T."/>
            <person name="Bennett K.L."/>
            <person name="Superti-Furga G."/>
            <person name="Colinge J."/>
        </authorList>
    </citation>
    <scope>IDENTIFICATION BY MASS SPECTROMETRY [LARGE SCALE ANALYSIS]</scope>
</reference>
<reference key="22">
    <citation type="journal article" date="2011" name="J. Virol.">
        <title>Ebolavirus proteins suppress the effects of small interfering RNA by direct interaction with the mammalian RNA interference pathway.</title>
        <authorList>
            <person name="Fabozzi G."/>
            <person name="Nabel C.S."/>
            <person name="Dolan M.A."/>
            <person name="Sullivan N.J."/>
        </authorList>
    </citation>
    <scope>INTERACTION WITH EBOLAVIRUS VP35 (MICROBIAL INFECTION)</scope>
</reference>
<reference key="23">
    <citation type="journal article" date="2011" name="Sci. Signal.">
        <title>System-wide temporal characterization of the proteome and phosphoproteome of human embryonic stem cell differentiation.</title>
        <authorList>
            <person name="Rigbolt K.T."/>
            <person name="Prokhorova T.A."/>
            <person name="Akimov V."/>
            <person name="Henningsen J."/>
            <person name="Johansen P.T."/>
            <person name="Kratchmarova I."/>
            <person name="Kassem M."/>
            <person name="Mann M."/>
            <person name="Olsen J.V."/>
            <person name="Blagoev B."/>
        </authorList>
    </citation>
    <scope>PHOSPHORYLATION [LARGE SCALE ANALYSIS] AT SER-18</scope>
    <scope>IDENTIFICATION BY MASS SPECTROMETRY [LARGE SCALE ANALYSIS]</scope>
</reference>
<reference key="24">
    <citation type="journal article" date="2012" name="Cell Cycle">
        <title>The RAX/PACT-PKR stress response pathway promotes p53 sumoylation and activation, leading to G(1) arrest.</title>
        <authorList>
            <person name="Bennett R.L."/>
            <person name="Pan Y."/>
            <person name="Christian J."/>
            <person name="Hui T."/>
            <person name="May W.S. Jr."/>
        </authorList>
    </citation>
    <scope>SUBCELLULAR LOCATION</scope>
</reference>
<reference key="25">
    <citation type="journal article" date="2013" name="J. Proteome Res.">
        <title>Toward a comprehensive characterization of a human cancer cell phosphoproteome.</title>
        <authorList>
            <person name="Zhou H."/>
            <person name="Di Palma S."/>
            <person name="Preisinger C."/>
            <person name="Peng M."/>
            <person name="Polat A.N."/>
            <person name="Heck A.J."/>
            <person name="Mohammed S."/>
        </authorList>
    </citation>
    <scope>PHOSPHORYLATION [LARGE SCALE ANALYSIS] AT SER-18 AND SER-167</scope>
    <scope>IDENTIFICATION BY MASS SPECTROMETRY [LARGE SCALE ANALYSIS]</scope>
    <source>
        <tissue>Cervix carcinoma</tissue>
        <tissue>Erythroleukemia</tissue>
    </source>
</reference>
<reference key="26">
    <citation type="journal article" date="2013" name="Cell Host Microbe">
        <title>Mutual antagonism between the Ebola virus VP35 protein and the RIG-I activator PACT determines infection outcome.</title>
        <authorList>
            <person name="Luthra P."/>
            <person name="Ramanan P."/>
            <person name="Mire C.E."/>
            <person name="Weisend C."/>
            <person name="Tsuda Y."/>
            <person name="Yen B."/>
            <person name="Liu G."/>
            <person name="Leung D.W."/>
            <person name="Geisbert T.W."/>
            <person name="Ebihara H."/>
            <person name="Amarasinghe G.K."/>
            <person name="Basler C.F."/>
        </authorList>
    </citation>
    <scope>INTERACTION WITH EBOLAVIRUS PROTEIN VP35 (MICROBIAL INFECTION) AND RIGI</scope>
</reference>
<reference key="27">
    <citation type="journal article" date="2015" name="Proteomics">
        <title>N-terminome analysis of the human mitochondrial proteome.</title>
        <authorList>
            <person name="Vaca Jacome A.S."/>
            <person name="Rabilloud T."/>
            <person name="Schaeffer-Reiss C."/>
            <person name="Rompais M."/>
            <person name="Ayoub D."/>
            <person name="Lane L."/>
            <person name="Bairoch A."/>
            <person name="Van Dorsselaer A."/>
            <person name="Carapito C."/>
        </authorList>
    </citation>
    <scope>IDENTIFICATION BY MASS SPECTROMETRY [LARGE SCALE ANALYSIS]</scope>
</reference>
<reference key="28">
    <citation type="journal article" date="2017" name="PLoS Pathog.">
        <title>KSHV inhibits stress granule formation by viral ORF57 blocking PKR activation.</title>
        <authorList>
            <person name="Sharma N.R."/>
            <person name="Majerciak V."/>
            <person name="Kruhlak M.J."/>
            <person name="Zheng Z.M."/>
        </authorList>
    </citation>
    <scope>INTERACTION WITH HUMAN HERPES VIRUS 8 PROTEIN KTA/ORF57 (MICROBIAL INFECTION)</scope>
</reference>
<reference key="29">
    <citation type="submission" date="2006-09" db="PDB data bank">
        <title>Solution structure of the DSRM domain of protein activator of the interferon-induced protein kinase.</title>
        <authorList>
            <consortium name="RIKEN structural genomics initiative (RSGI)"/>
        </authorList>
    </citation>
    <scope>STRUCTURE BY NMR OF 32-104</scope>
</reference>
<reference key="30">
    <citation type="journal article" date="2008" name="Lancet Neurol.">
        <title>DYT16, a novel young-onset dystonia-parkinsonism disorder: identification of a segregating mutation in the stress-response protein PRKRA.</title>
        <authorList>
            <person name="Camargos S."/>
            <person name="Scholz S."/>
            <person name="Simon-Sanchez J."/>
            <person name="Paisan-Ruiz C."/>
            <person name="Lewis P."/>
            <person name="Hernandez D."/>
            <person name="Ding J."/>
            <person name="Gibbs J.R."/>
            <person name="Cookson M.R."/>
            <person name="Bras J."/>
            <person name="Guerreiro R."/>
            <person name="Oliveira C.R."/>
            <person name="Lees A."/>
            <person name="Hardy J."/>
            <person name="Cardoso F."/>
            <person name="Singleton A.B."/>
        </authorList>
    </citation>
    <scope>VARIANT DYT16 LEU-222</scope>
</reference>
<reference key="31">
    <citation type="journal article" date="2008" name="Lancet Neurol.">
        <title>A heterozygous frameshift mutation in PRKRA (DYT16) associated with generalised dystonia in a German patient.</title>
        <authorList>
            <person name="Seibler P."/>
            <person name="Djarmati A."/>
            <person name="Langpap B."/>
            <person name="Hagenah J."/>
            <person name="Schmidt A."/>
            <person name="Brueggemann N."/>
            <person name="Siebner H."/>
            <person name="Jabusch H.-C."/>
            <person name="Altenmueller E."/>
            <person name="Muenchau A."/>
            <person name="Lohmann K."/>
            <person name="Klein C."/>
        </authorList>
    </citation>
    <scope>INVOLVEMENT IN DYT16</scope>
</reference>
<sequence>MSQSRHRAEAPPLEREDSGTFSLGKMITAKPGKTPIQVLHEYGMKTKNIPVYECERSDVQIHVPTFTFRVTVGDITCTGEGTSKKLAKHRAAEAAINILKANASICFAVPDPLMPDPSKQPKNQLNPIGSLQELAIHHGWRLPEYTLSQEGGPAHKREYTTICRLESFMETGKGASKKQAKRNAAEKFLAKFSNISPENHISLTNVVGHSLGCTWHSLRNSPGEKINLLKRSLLSIPNTDYIQLLSEIAKEQGFNITYLDIDELSANGQYQCLAELSTSPITVCHGSGISCGNAQSDAAHNALQYLKIIAERK</sequence>
<protein>
    <recommendedName>
        <fullName>Interferon-inducible double-stranded RNA-dependent protein kinase activator A</fullName>
    </recommendedName>
    <alternativeName>
        <fullName>PKR-associated protein X</fullName>
    </alternativeName>
    <alternativeName>
        <fullName>PKR-associating protein X</fullName>
    </alternativeName>
    <alternativeName>
        <fullName>Protein activator of the interferon-induced protein kinase</fullName>
    </alternativeName>
    <alternativeName>
        <fullName>Protein kinase, interferon-inducible double-stranded RNA-dependent activator</fullName>
    </alternativeName>
</protein>
<gene>
    <name type="primary">PRKRA</name>
    <name type="synonym">PACT</name>
    <name type="synonym">RAX</name>
    <name type="ORF">HSD-14</name>
    <name type="ORF">HSD14</name>
</gene>
<feature type="chain" id="PRO_0000223609" description="Interferon-inducible double-stranded RNA-dependent protein kinase activator A">
    <location>
        <begin position="1"/>
        <end position="313"/>
    </location>
</feature>
<feature type="domain" description="DRBM 1" evidence="2">
    <location>
        <begin position="34"/>
        <end position="101"/>
    </location>
</feature>
<feature type="domain" description="DRBM 2" evidence="2">
    <location>
        <begin position="126"/>
        <end position="194"/>
    </location>
</feature>
<feature type="domain" description="DRBM 3" evidence="2">
    <location>
        <begin position="240"/>
        <end position="308"/>
    </location>
</feature>
<feature type="region of interest" description="Sufficient for self-association and interaction with TARBP2">
    <location>
        <begin position="1"/>
        <end position="103"/>
    </location>
</feature>
<feature type="region of interest" description="Disordered" evidence="3">
    <location>
        <begin position="1"/>
        <end position="21"/>
    </location>
</feature>
<feature type="region of interest" description="Sufficient for self-association and interaction with TARBP2">
    <location>
        <begin position="102"/>
        <end position="195"/>
    </location>
</feature>
<feature type="region of interest" description="Sufficient for self-association and interaction with TARBP2">
    <location>
        <begin position="195"/>
        <end position="313"/>
    </location>
</feature>
<feature type="compositionally biased region" description="Basic and acidic residues" evidence="3">
    <location>
        <begin position="1"/>
        <end position="18"/>
    </location>
</feature>
<feature type="modified residue" description="Phosphoserine" evidence="20 21 22 23">
    <location>
        <position position="18"/>
    </location>
</feature>
<feature type="modified residue" description="Phosphoserine" evidence="23">
    <location>
        <position position="167"/>
    </location>
</feature>
<feature type="modified residue" description="Phosphoserine" evidence="7">
    <location>
        <position position="246"/>
    </location>
</feature>
<feature type="modified residue" description="Phosphoserine" evidence="7">
    <location>
        <position position="287"/>
    </location>
</feature>
<feature type="splice variant" id="VSP_017282" description="In isoform 3." evidence="18">
    <location>
        <begin position="1"/>
        <end position="25"/>
    </location>
</feature>
<feature type="splice variant" id="VSP_017283" description="In isoform 2." evidence="17">
    <original>MSQSRHRAEAPPLEREDSGTF</original>
    <variation>MQSTPFCGFC</variation>
    <location>
        <begin position="1"/>
        <end position="21"/>
    </location>
</feature>
<feature type="sequence variant" id="VAR_046213" description="In DYT16; dbSNP:rs121434410." evidence="10">
    <original>P</original>
    <variation>L</variation>
    <location>
        <position position="222"/>
    </location>
</feature>
<feature type="mutagenesis site" description="No effect on apoptosis induction under conditions of stress." evidence="7">
    <original>S</original>
    <variation>A</variation>
    <location>
        <position position="18"/>
    </location>
</feature>
<feature type="mutagenesis site" description="Does not induce apoptosis." evidence="7">
    <original>S</original>
    <variation>D</variation>
    <location>
        <position position="18"/>
    </location>
</feature>
<feature type="mutagenesis site" description="Abrogates apoptosis induction under conditions of stress." evidence="7">
    <original>Q</original>
    <variation>A</variation>
    <location>
        <position position="243"/>
    </location>
</feature>
<feature type="mutagenesis site" description="Abrogates apoptosis induction under conditions of stress and binding to EIF2AK2. Prevents activation of EIF2AK2 in stressed cells; when associated with A-287." evidence="7">
    <original>S</original>
    <variation>A</variation>
    <location>
        <position position="246"/>
    </location>
</feature>
<feature type="mutagenesis site" description="Induces activation of EIF2AK2 and apoptosis in unstressed cells; when associated with D-287." evidence="7">
    <original>S</original>
    <variation>D</variation>
    <location>
        <position position="246"/>
    </location>
</feature>
<feature type="mutagenesis site" description="Abrogates apoptosis induction under conditions of stress." evidence="7">
    <original>D</original>
    <variation>A</variation>
    <location>
        <position position="260"/>
    </location>
</feature>
<feature type="mutagenesis site" description="Abrogates apoptosis induction under conditions of stress." evidence="7">
    <original>D</original>
    <variation>A</variation>
    <location>
        <position position="262"/>
    </location>
</feature>
<feature type="mutagenesis site" description="Abrogates apoptosis induction under conditions of stress." evidence="7">
    <original>S</original>
    <variation>A</variation>
    <location>
        <position position="265"/>
    </location>
</feature>
<feature type="mutagenesis site" description="Abrogates apoptosis induction under conditions of stress." evidence="7">
    <original>Q</original>
    <variation>A</variation>
    <location>
        <position position="271"/>
    </location>
</feature>
<feature type="mutagenesis site" description="Abrogates apoptosis induction under conditions of stress." evidence="7">
    <original>S</original>
    <variation>A</variation>
    <location>
        <position position="279"/>
    </location>
</feature>
<feature type="mutagenesis site" description="Abrogates apoptosis induction under conditions of stress. Prevents activation of EIF2AK2 in stressed cells; when associated with A-246." evidence="7">
    <original>S</original>
    <variation>A</variation>
    <location>
        <position position="287"/>
    </location>
</feature>
<feature type="mutagenesis site" description="Induces activation of EIF2AK2 and apoptosis in unstressed cells; when associated with D-246." evidence="7">
    <original>S</original>
    <variation>D</variation>
    <location>
        <position position="287"/>
    </location>
</feature>
<feature type="mutagenesis site" description="Abrogates apoptosis induction under conditions of stress." evidence="7">
    <original>G</original>
    <variation>A</variation>
    <location>
        <position position="288"/>
    </location>
</feature>
<feature type="mutagenesis site" description="Abrogates apoptosis induction under conditions of stress." evidence="7">
    <original>C</original>
    <variation>A</variation>
    <location>
        <position position="291"/>
    </location>
</feature>
<feature type="mutagenesis site" description="Abrogates interaction with DICER1 but does not affect interaction with AGO2." evidence="6">
    <original>AA</original>
    <variation>KK</variation>
    <location>
        <begin position="298"/>
        <end position="299"/>
    </location>
</feature>
<feature type="sequence conflict" description="In Ref. 8; BAD96827." evidence="19" ref="8">
    <original>T</original>
    <variation>A</variation>
    <location>
        <position position="282"/>
    </location>
</feature>
<feature type="helix" evidence="24">
    <location>
        <begin position="35"/>
        <end position="45"/>
    </location>
</feature>
<feature type="strand" evidence="24">
    <location>
        <begin position="51"/>
        <end position="58"/>
    </location>
</feature>
<feature type="strand" evidence="24">
    <location>
        <begin position="60"/>
        <end position="63"/>
    </location>
</feature>
<feature type="strand" evidence="24">
    <location>
        <begin position="65"/>
        <end position="72"/>
    </location>
</feature>
<feature type="strand" evidence="24">
    <location>
        <begin position="75"/>
        <end position="79"/>
    </location>
</feature>
<feature type="helix" evidence="24">
    <location>
        <begin position="86"/>
        <end position="101"/>
    </location>
</feature>
<dbReference type="EMBL" id="AF072860">
    <property type="protein sequence ID" value="AAC25672.1"/>
    <property type="molecule type" value="mRNA"/>
</dbReference>
<dbReference type="EMBL" id="AF083033">
    <property type="protein sequence ID" value="AAD33099.1"/>
    <property type="molecule type" value="mRNA"/>
</dbReference>
<dbReference type="EMBL" id="AY251164">
    <property type="protein sequence ID" value="AAP20061.1"/>
    <property type="molecule type" value="mRNA"/>
</dbReference>
<dbReference type="EMBL" id="AL136615">
    <property type="protein sequence ID" value="CAB66550.1"/>
    <property type="molecule type" value="mRNA"/>
</dbReference>
<dbReference type="EMBL" id="AL833867">
    <property type="protein sequence ID" value="CAD38725.1"/>
    <property type="molecule type" value="Transcribed_RNA"/>
</dbReference>
<dbReference type="EMBL" id="BT007243">
    <property type="protein sequence ID" value="AAP35907.1"/>
    <property type="molecule type" value="mRNA"/>
</dbReference>
<dbReference type="EMBL" id="AK290601">
    <property type="protein sequence ID" value="BAF83290.1"/>
    <property type="molecule type" value="mRNA"/>
</dbReference>
<dbReference type="EMBL" id="CR533525">
    <property type="protein sequence ID" value="CAG38556.1"/>
    <property type="molecule type" value="mRNA"/>
</dbReference>
<dbReference type="EMBL" id="AK223107">
    <property type="protein sequence ID" value="BAD96827.1"/>
    <property type="molecule type" value="mRNA"/>
</dbReference>
<dbReference type="EMBL" id="AC009948">
    <property type="protein sequence ID" value="AAX88882.1"/>
    <property type="molecule type" value="Genomic_DNA"/>
</dbReference>
<dbReference type="EMBL" id="CH471058">
    <property type="protein sequence ID" value="EAX11036.1"/>
    <property type="molecule type" value="Genomic_DNA"/>
</dbReference>
<dbReference type="EMBL" id="BC009470">
    <property type="protein sequence ID" value="AAH09470.1"/>
    <property type="molecule type" value="mRNA"/>
</dbReference>
<dbReference type="CCDS" id="CCDS2279.1">
    <molecule id="O75569-1"/>
</dbReference>
<dbReference type="CCDS" id="CCDS46460.1">
    <molecule id="O75569-2"/>
</dbReference>
<dbReference type="CCDS" id="CCDS46461.1">
    <molecule id="O75569-3"/>
</dbReference>
<dbReference type="RefSeq" id="NP_001132989.1">
    <molecule id="O75569-2"/>
    <property type="nucleotide sequence ID" value="NM_001139517.1"/>
</dbReference>
<dbReference type="RefSeq" id="NP_001132990.1">
    <molecule id="O75569-3"/>
    <property type="nucleotide sequence ID" value="NM_001139518.1"/>
</dbReference>
<dbReference type="RefSeq" id="NP_003681.1">
    <molecule id="O75569-1"/>
    <property type="nucleotide sequence ID" value="NM_003690.5"/>
</dbReference>
<dbReference type="PDB" id="2DIX">
    <property type="method" value="NMR"/>
    <property type="chains" value="A=33-103"/>
</dbReference>
<dbReference type="PDBsum" id="2DIX"/>
<dbReference type="EMDB" id="EMD-5604"/>
<dbReference type="EMDB" id="EMD-5605"/>
<dbReference type="EMDB" id="EMD-5606"/>
<dbReference type="SMR" id="O75569"/>
<dbReference type="BioGRID" id="114143">
    <property type="interactions" value="424"/>
</dbReference>
<dbReference type="ComplexPortal" id="CPX-1072">
    <property type="entry name" value="RISC-loading complex, PRKRA variant"/>
</dbReference>
<dbReference type="DIP" id="DIP-41809N"/>
<dbReference type="FunCoup" id="O75569">
    <property type="interactions" value="1598"/>
</dbReference>
<dbReference type="IntAct" id="O75569">
    <property type="interactions" value="347"/>
</dbReference>
<dbReference type="MINT" id="O75569"/>
<dbReference type="STRING" id="9606.ENSP00000318176"/>
<dbReference type="GlyGen" id="O75569">
    <property type="glycosylation" value="2 sites, 1 O-linked glycan (1 site)"/>
</dbReference>
<dbReference type="iPTMnet" id="O75569"/>
<dbReference type="PhosphoSitePlus" id="O75569"/>
<dbReference type="SwissPalm" id="O75569"/>
<dbReference type="BioMuta" id="PRKRA"/>
<dbReference type="CPTAC" id="CPTAC-994"/>
<dbReference type="jPOST" id="O75569"/>
<dbReference type="MassIVE" id="O75569"/>
<dbReference type="PaxDb" id="9606-ENSP00000318176"/>
<dbReference type="PeptideAtlas" id="O75569"/>
<dbReference type="ProteomicsDB" id="50088">
    <molecule id="O75569-1"/>
</dbReference>
<dbReference type="ProteomicsDB" id="50089">
    <molecule id="O75569-2"/>
</dbReference>
<dbReference type="ProteomicsDB" id="50090">
    <molecule id="O75569-3"/>
</dbReference>
<dbReference type="Pumba" id="O75569"/>
<dbReference type="Antibodypedia" id="3306">
    <property type="antibodies" value="375 antibodies from 37 providers"/>
</dbReference>
<dbReference type="DNASU" id="8575"/>
<dbReference type="Ensembl" id="ENST00000325748.9">
    <molecule id="O75569-1"/>
    <property type="protein sequence ID" value="ENSP00000318176.4"/>
    <property type="gene ID" value="ENSG00000180228.14"/>
</dbReference>
<dbReference type="Ensembl" id="ENST00000432031.6">
    <molecule id="O75569-2"/>
    <property type="protein sequence ID" value="ENSP00000393883.2"/>
    <property type="gene ID" value="ENSG00000180228.14"/>
</dbReference>
<dbReference type="Ensembl" id="ENST00000487082.5">
    <molecule id="O75569-3"/>
    <property type="protein sequence ID" value="ENSP00000430604.1"/>
    <property type="gene ID" value="ENSG00000180228.14"/>
</dbReference>
<dbReference type="GeneID" id="8575"/>
<dbReference type="KEGG" id="hsa:8575"/>
<dbReference type="MANE-Select" id="ENST00000325748.9">
    <property type="protein sequence ID" value="ENSP00000318176.4"/>
    <property type="RefSeq nucleotide sequence ID" value="NM_003690.5"/>
    <property type="RefSeq protein sequence ID" value="NP_003681.1"/>
</dbReference>
<dbReference type="UCSC" id="uc002umd.4">
    <molecule id="O75569-1"/>
    <property type="organism name" value="human"/>
</dbReference>
<dbReference type="AGR" id="HGNC:9438"/>
<dbReference type="CTD" id="8575"/>
<dbReference type="DisGeNET" id="8575"/>
<dbReference type="GeneCards" id="PRKRA"/>
<dbReference type="HGNC" id="HGNC:9438">
    <property type="gene designation" value="PRKRA"/>
</dbReference>
<dbReference type="HPA" id="ENSG00000180228">
    <property type="expression patterns" value="Low tissue specificity"/>
</dbReference>
<dbReference type="MalaCards" id="PRKRA"/>
<dbReference type="MIM" id="603424">
    <property type="type" value="gene"/>
</dbReference>
<dbReference type="MIM" id="612067">
    <property type="type" value="phenotype"/>
</dbReference>
<dbReference type="neXtProt" id="NX_O75569"/>
<dbReference type="OpenTargets" id="ENSG00000180228"/>
<dbReference type="Orphanet" id="210571">
    <property type="disease" value="Dystonia 16"/>
</dbReference>
<dbReference type="PharmGKB" id="PA33780"/>
<dbReference type="VEuPathDB" id="HostDB:ENSG00000180228"/>
<dbReference type="eggNOG" id="KOG3732">
    <property type="taxonomic scope" value="Eukaryota"/>
</dbReference>
<dbReference type="GeneTree" id="ENSGT00940000157618"/>
<dbReference type="HOGENOM" id="CLU_048292_0_0_1"/>
<dbReference type="InParanoid" id="O75569"/>
<dbReference type="OMA" id="PEYEFEK"/>
<dbReference type="OrthoDB" id="10056847at2759"/>
<dbReference type="PAN-GO" id="O75569">
    <property type="GO annotations" value="8 GO annotations based on evolutionary models"/>
</dbReference>
<dbReference type="PhylomeDB" id="O75569"/>
<dbReference type="TreeFam" id="TF315953"/>
<dbReference type="PathwayCommons" id="O75569"/>
<dbReference type="Reactome" id="R-HSA-203927">
    <property type="pathway name" value="MicroRNA (miRNA) biogenesis"/>
</dbReference>
<dbReference type="Reactome" id="R-HSA-426486">
    <property type="pathway name" value="Small interfering RNA (siRNA) biogenesis"/>
</dbReference>
<dbReference type="Reactome" id="R-HSA-9833482">
    <property type="pathway name" value="PKR-mediated signaling"/>
</dbReference>
<dbReference type="SignaLink" id="O75569"/>
<dbReference type="SIGNOR" id="O75569"/>
<dbReference type="BioGRID-ORCS" id="8575">
    <property type="hits" value="382 hits in 1167 CRISPR screens"/>
</dbReference>
<dbReference type="ChiTaRS" id="PRKRA">
    <property type="organism name" value="human"/>
</dbReference>
<dbReference type="EvolutionaryTrace" id="O75569"/>
<dbReference type="GeneWiki" id="PRKRA"/>
<dbReference type="GenomeRNAi" id="8575"/>
<dbReference type="Pharos" id="O75569">
    <property type="development level" value="Tbio"/>
</dbReference>
<dbReference type="PRO" id="PR:O75569"/>
<dbReference type="Proteomes" id="UP000005640">
    <property type="component" value="Chromosome 2"/>
</dbReference>
<dbReference type="RNAct" id="O75569">
    <property type="molecule type" value="protein"/>
</dbReference>
<dbReference type="Bgee" id="ENSG00000180228">
    <property type="expression patterns" value="Expressed in sperm and 210 other cell types or tissues"/>
</dbReference>
<dbReference type="ExpressionAtlas" id="O75569">
    <property type="expression patterns" value="baseline and differential"/>
</dbReference>
<dbReference type="GO" id="GO:0005737">
    <property type="term" value="C:cytoplasm"/>
    <property type="evidence" value="ECO:0000314"/>
    <property type="project" value="UniProtKB"/>
</dbReference>
<dbReference type="GO" id="GO:0005829">
    <property type="term" value="C:cytosol"/>
    <property type="evidence" value="ECO:0000314"/>
    <property type="project" value="HPA"/>
</dbReference>
<dbReference type="GO" id="GO:0016020">
    <property type="term" value="C:membrane"/>
    <property type="evidence" value="ECO:0007005"/>
    <property type="project" value="UniProtKB"/>
</dbReference>
<dbReference type="GO" id="GO:0005654">
    <property type="term" value="C:nucleoplasm"/>
    <property type="evidence" value="ECO:0000314"/>
    <property type="project" value="HPA"/>
</dbReference>
<dbReference type="GO" id="GO:0005634">
    <property type="term" value="C:nucleus"/>
    <property type="evidence" value="ECO:0000318"/>
    <property type="project" value="GO_Central"/>
</dbReference>
<dbReference type="GO" id="GO:0048471">
    <property type="term" value="C:perinuclear region of cytoplasm"/>
    <property type="evidence" value="ECO:0007669"/>
    <property type="project" value="UniProtKB-SubCell"/>
</dbReference>
<dbReference type="GO" id="GO:0016442">
    <property type="term" value="C:RISC complex"/>
    <property type="evidence" value="ECO:0000318"/>
    <property type="project" value="GO_Central"/>
</dbReference>
<dbReference type="GO" id="GO:0070578">
    <property type="term" value="C:RISC-loading complex"/>
    <property type="evidence" value="ECO:0000314"/>
    <property type="project" value="BHF-UCL"/>
</dbReference>
<dbReference type="GO" id="GO:0003725">
    <property type="term" value="F:double-stranded RNA binding"/>
    <property type="evidence" value="ECO:0000314"/>
    <property type="project" value="BHF-UCL"/>
</dbReference>
<dbReference type="GO" id="GO:0008047">
    <property type="term" value="F:enzyme activator activity"/>
    <property type="evidence" value="ECO:0000304"/>
    <property type="project" value="ProtInc"/>
</dbReference>
<dbReference type="GO" id="GO:0019899">
    <property type="term" value="F:enzyme binding"/>
    <property type="evidence" value="ECO:0000353"/>
    <property type="project" value="BHF-UCL"/>
</dbReference>
<dbReference type="GO" id="GO:0042802">
    <property type="term" value="F:identical protein binding"/>
    <property type="evidence" value="ECO:0000353"/>
    <property type="project" value="IntAct"/>
</dbReference>
<dbReference type="GO" id="GO:0070883">
    <property type="term" value="F:pre-miRNA binding"/>
    <property type="evidence" value="ECO:0000314"/>
    <property type="project" value="BHF-UCL"/>
</dbReference>
<dbReference type="GO" id="GO:0042803">
    <property type="term" value="F:protein homodimerization activity"/>
    <property type="evidence" value="ECO:0000353"/>
    <property type="project" value="UniProtKB"/>
</dbReference>
<dbReference type="GO" id="GO:0030295">
    <property type="term" value="F:protein kinase activator activity"/>
    <property type="evidence" value="ECO:0000314"/>
    <property type="project" value="UniProt"/>
</dbReference>
<dbReference type="GO" id="GO:0003723">
    <property type="term" value="F:RNA binding"/>
    <property type="evidence" value="ECO:0007005"/>
    <property type="project" value="UniProtKB"/>
</dbReference>
<dbReference type="GO" id="GO:0035197">
    <property type="term" value="F:siRNA binding"/>
    <property type="evidence" value="ECO:0000318"/>
    <property type="project" value="GO_Central"/>
</dbReference>
<dbReference type="GO" id="GO:0140374">
    <property type="term" value="P:antiviral innate immune response"/>
    <property type="evidence" value="ECO:0000314"/>
    <property type="project" value="UniProt"/>
</dbReference>
<dbReference type="GO" id="GO:0034599">
    <property type="term" value="P:cellular response to oxidative stress"/>
    <property type="evidence" value="ECO:0007669"/>
    <property type="project" value="Ensembl"/>
</dbReference>
<dbReference type="GO" id="GO:0006955">
    <property type="term" value="P:immune response"/>
    <property type="evidence" value="ECO:0000304"/>
    <property type="project" value="ProtInc"/>
</dbReference>
<dbReference type="GO" id="GO:0042474">
    <property type="term" value="P:middle ear morphogenesis"/>
    <property type="evidence" value="ECO:0007669"/>
    <property type="project" value="Ensembl"/>
</dbReference>
<dbReference type="GO" id="GO:0035196">
    <property type="term" value="P:miRNA processing"/>
    <property type="evidence" value="ECO:0000314"/>
    <property type="project" value="BHF-UCL"/>
</dbReference>
<dbReference type="GO" id="GO:0008285">
    <property type="term" value="P:negative regulation of cell population proliferation"/>
    <property type="evidence" value="ECO:0000304"/>
    <property type="project" value="ProtInc"/>
</dbReference>
<dbReference type="GO" id="GO:0042473">
    <property type="term" value="P:outer ear morphogenesis"/>
    <property type="evidence" value="ECO:0007669"/>
    <property type="project" value="Ensembl"/>
</dbReference>
<dbReference type="GO" id="GO:2001244">
    <property type="term" value="P:positive regulation of intrinsic apoptotic signaling pathway"/>
    <property type="evidence" value="ECO:0007669"/>
    <property type="project" value="Ensembl"/>
</dbReference>
<dbReference type="GO" id="GO:0031054">
    <property type="term" value="P:pre-miRNA processing"/>
    <property type="evidence" value="ECO:0000314"/>
    <property type="project" value="BHF-UCL"/>
</dbReference>
<dbReference type="GO" id="GO:0050821">
    <property type="term" value="P:protein stabilization"/>
    <property type="evidence" value="ECO:0000315"/>
    <property type="project" value="BHF-UCL"/>
</dbReference>
<dbReference type="GO" id="GO:0070920">
    <property type="term" value="P:regulation of regulatory ncRNA processing"/>
    <property type="evidence" value="ECO:0000318"/>
    <property type="project" value="GO_Central"/>
</dbReference>
<dbReference type="GO" id="GO:0009615">
    <property type="term" value="P:response to virus"/>
    <property type="evidence" value="ECO:0000304"/>
    <property type="project" value="ProtInc"/>
</dbReference>
<dbReference type="GO" id="GO:0070922">
    <property type="term" value="P:RISC complex assembly"/>
    <property type="evidence" value="ECO:0000314"/>
    <property type="project" value="ComplexPortal"/>
</dbReference>
<dbReference type="GO" id="GO:0030422">
    <property type="term" value="P:siRNA processing"/>
    <property type="evidence" value="ECO:0000314"/>
    <property type="project" value="UniProtKB"/>
</dbReference>
<dbReference type="GO" id="GO:0048705">
    <property type="term" value="P:skeletal system morphogenesis"/>
    <property type="evidence" value="ECO:0007669"/>
    <property type="project" value="Ensembl"/>
</dbReference>
<dbReference type="CDD" id="cd19889">
    <property type="entry name" value="DSRM_PRKRA_rpt1"/>
    <property type="match status" value="1"/>
</dbReference>
<dbReference type="CDD" id="cd19891">
    <property type="entry name" value="DSRM_PRKRA_rpt2"/>
    <property type="match status" value="1"/>
</dbReference>
<dbReference type="CDD" id="cd19892">
    <property type="entry name" value="DSRM_PRKRA_rpt3"/>
    <property type="match status" value="1"/>
</dbReference>
<dbReference type="FunFam" id="3.30.160.20:FF:000005">
    <property type="entry name" value="Putative double-stranded RNA-specific adenosine deaminase"/>
    <property type="match status" value="1"/>
</dbReference>
<dbReference type="FunFam" id="3.30.160.20:FF:000019">
    <property type="entry name" value="RISC-loading complex subunit TARBP2"/>
    <property type="match status" value="1"/>
</dbReference>
<dbReference type="FunFam" id="3.30.160.20:FF:000018">
    <property type="entry name" value="RISC-loading complex subunit TARBP2 isoform X3"/>
    <property type="match status" value="1"/>
</dbReference>
<dbReference type="Gene3D" id="3.30.160.20">
    <property type="match status" value="3"/>
</dbReference>
<dbReference type="InterPro" id="IPR014720">
    <property type="entry name" value="dsRBD_dom"/>
</dbReference>
<dbReference type="InterPro" id="IPR044465">
    <property type="entry name" value="PRKRA_DSRM_1"/>
</dbReference>
<dbReference type="InterPro" id="IPR044466">
    <property type="entry name" value="PRKRA_DSRM_2"/>
</dbReference>
<dbReference type="InterPro" id="IPR044467">
    <property type="entry name" value="PRKRA_DSRM_3"/>
</dbReference>
<dbReference type="InterPro" id="IPR051247">
    <property type="entry name" value="RLC_Component"/>
</dbReference>
<dbReference type="PANTHER" id="PTHR46205:SF2">
    <property type="entry name" value="INTERFERON-INDUCIBLE DOUBLE-STRANDED RNA-DEPENDENT PROTEIN KINASE ACTIVATOR A"/>
    <property type="match status" value="1"/>
</dbReference>
<dbReference type="PANTHER" id="PTHR46205">
    <property type="entry name" value="LOQUACIOUS, ISOFORM B"/>
    <property type="match status" value="1"/>
</dbReference>
<dbReference type="Pfam" id="PF00035">
    <property type="entry name" value="dsrm"/>
    <property type="match status" value="2"/>
</dbReference>
<dbReference type="SMART" id="SM00358">
    <property type="entry name" value="DSRM"/>
    <property type="match status" value="3"/>
</dbReference>
<dbReference type="SUPFAM" id="SSF54768">
    <property type="entry name" value="dsRNA-binding domain-like"/>
    <property type="match status" value="3"/>
</dbReference>
<dbReference type="PROSITE" id="PS50137">
    <property type="entry name" value="DS_RBD"/>
    <property type="match status" value="3"/>
</dbReference>
<name>PRKRA_HUMAN</name>
<organism>
    <name type="scientific">Homo sapiens</name>
    <name type="common">Human</name>
    <dbReference type="NCBI Taxonomy" id="9606"/>
    <lineage>
        <taxon>Eukaryota</taxon>
        <taxon>Metazoa</taxon>
        <taxon>Chordata</taxon>
        <taxon>Craniata</taxon>
        <taxon>Vertebrata</taxon>
        <taxon>Euteleostomi</taxon>
        <taxon>Mammalia</taxon>
        <taxon>Eutheria</taxon>
        <taxon>Euarchontoglires</taxon>
        <taxon>Primates</taxon>
        <taxon>Haplorrhini</taxon>
        <taxon>Catarrhini</taxon>
        <taxon>Hominidae</taxon>
        <taxon>Homo</taxon>
    </lineage>
</organism>
<evidence type="ECO:0000250" key="1"/>
<evidence type="ECO:0000255" key="2">
    <source>
        <dbReference type="PROSITE-ProRule" id="PRU00266"/>
    </source>
</evidence>
<evidence type="ECO:0000256" key="3">
    <source>
        <dbReference type="SAM" id="MobiDB-lite"/>
    </source>
</evidence>
<evidence type="ECO:0000269" key="4">
    <source>
    </source>
</evidence>
<evidence type="ECO:0000269" key="5">
    <source>
    </source>
</evidence>
<evidence type="ECO:0000269" key="6">
    <source>
    </source>
</evidence>
<evidence type="ECO:0000269" key="7">
    <source>
    </source>
</evidence>
<evidence type="ECO:0000269" key="8">
    <source>
    </source>
</evidence>
<evidence type="ECO:0000269" key="9">
    <source>
    </source>
</evidence>
<evidence type="ECO:0000269" key="10">
    <source>
    </source>
</evidence>
<evidence type="ECO:0000269" key="11">
    <source>
    </source>
</evidence>
<evidence type="ECO:0000269" key="12">
    <source>
    </source>
</evidence>
<evidence type="ECO:0000269" key="13">
    <source>
    </source>
</evidence>
<evidence type="ECO:0000269" key="14">
    <source>
    </source>
</evidence>
<evidence type="ECO:0000269" key="15">
    <source>
    </source>
</evidence>
<evidence type="ECO:0000269" key="16">
    <source>
    </source>
</evidence>
<evidence type="ECO:0000303" key="17">
    <source>
    </source>
</evidence>
<evidence type="ECO:0000303" key="18">
    <source ref="3"/>
</evidence>
<evidence type="ECO:0000305" key="19"/>
<evidence type="ECO:0007744" key="20">
    <source>
    </source>
</evidence>
<evidence type="ECO:0007744" key="21">
    <source>
    </source>
</evidence>
<evidence type="ECO:0007744" key="22">
    <source>
    </source>
</evidence>
<evidence type="ECO:0007744" key="23">
    <source>
    </source>
</evidence>
<evidence type="ECO:0007829" key="24">
    <source>
        <dbReference type="PDB" id="2DIX"/>
    </source>
</evidence>